<dbReference type="EC" id="4.2.1.59" evidence="1"/>
<dbReference type="EC" id="5.3.3.14" evidence="1"/>
<dbReference type="EMBL" id="CP000243">
    <property type="protein sequence ID" value="ABE06504.1"/>
    <property type="status" value="ALT_INIT"/>
    <property type="molecule type" value="Genomic_DNA"/>
</dbReference>
<dbReference type="RefSeq" id="WP_000227926.1">
    <property type="nucleotide sequence ID" value="NZ_CP064825.1"/>
</dbReference>
<dbReference type="SMR" id="Q1RDR0"/>
<dbReference type="GeneID" id="93245035"/>
<dbReference type="KEGG" id="eci:UTI89_C1019"/>
<dbReference type="HOGENOM" id="CLU_097925_0_0_6"/>
<dbReference type="UniPathway" id="UPA00094"/>
<dbReference type="Proteomes" id="UP000001952">
    <property type="component" value="Chromosome"/>
</dbReference>
<dbReference type="GO" id="GO:0005737">
    <property type="term" value="C:cytoplasm"/>
    <property type="evidence" value="ECO:0007669"/>
    <property type="project" value="UniProtKB-SubCell"/>
</dbReference>
<dbReference type="GO" id="GO:0019171">
    <property type="term" value="F:(3R)-hydroxyacyl-[acyl-carrier-protein] dehydratase activity"/>
    <property type="evidence" value="ECO:0007669"/>
    <property type="project" value="UniProtKB-UniRule"/>
</dbReference>
<dbReference type="GO" id="GO:0034017">
    <property type="term" value="F:trans-2-decenoyl-acyl-carrier-protein isomerase activity"/>
    <property type="evidence" value="ECO:0007669"/>
    <property type="project" value="UniProtKB-UniRule"/>
</dbReference>
<dbReference type="GO" id="GO:0006636">
    <property type="term" value="P:unsaturated fatty acid biosynthetic process"/>
    <property type="evidence" value="ECO:0007669"/>
    <property type="project" value="UniProtKB-UniRule"/>
</dbReference>
<dbReference type="CDD" id="cd01287">
    <property type="entry name" value="FabA"/>
    <property type="match status" value="1"/>
</dbReference>
<dbReference type="FunFam" id="3.10.129.10:FF:000003">
    <property type="entry name" value="3-hydroxydecanoyl-[acyl-carrier-protein] dehydratase"/>
    <property type="match status" value="1"/>
</dbReference>
<dbReference type="Gene3D" id="3.10.129.10">
    <property type="entry name" value="Hotdog Thioesterase"/>
    <property type="match status" value="1"/>
</dbReference>
<dbReference type="HAMAP" id="MF_00405">
    <property type="entry name" value="FabA"/>
    <property type="match status" value="1"/>
</dbReference>
<dbReference type="InterPro" id="IPR010083">
    <property type="entry name" value="FabA"/>
</dbReference>
<dbReference type="InterPro" id="IPR013114">
    <property type="entry name" value="FabA_FabZ"/>
</dbReference>
<dbReference type="InterPro" id="IPR029069">
    <property type="entry name" value="HotDog_dom_sf"/>
</dbReference>
<dbReference type="NCBIfam" id="TIGR01749">
    <property type="entry name" value="fabA"/>
    <property type="match status" value="1"/>
</dbReference>
<dbReference type="NCBIfam" id="NF003509">
    <property type="entry name" value="PRK05174.1"/>
    <property type="match status" value="1"/>
</dbReference>
<dbReference type="PANTHER" id="PTHR30272">
    <property type="entry name" value="3-HYDROXYACYL-[ACYL-CARRIER-PROTEIN] DEHYDRATASE"/>
    <property type="match status" value="1"/>
</dbReference>
<dbReference type="PANTHER" id="PTHR30272:SF8">
    <property type="entry name" value="3-HYDROXYDECANOYL-[ACYL-CARRIER-PROTEIN] DEHYDRATASE"/>
    <property type="match status" value="1"/>
</dbReference>
<dbReference type="Pfam" id="PF07977">
    <property type="entry name" value="FabA"/>
    <property type="match status" value="1"/>
</dbReference>
<dbReference type="SUPFAM" id="SSF54637">
    <property type="entry name" value="Thioesterase/thiol ester dehydrase-isomerase"/>
    <property type="match status" value="1"/>
</dbReference>
<keyword id="KW-0963">Cytoplasm</keyword>
<keyword id="KW-0275">Fatty acid biosynthesis</keyword>
<keyword id="KW-0276">Fatty acid metabolism</keyword>
<keyword id="KW-0413">Isomerase</keyword>
<keyword id="KW-0444">Lipid biosynthesis</keyword>
<keyword id="KW-0443">Lipid metabolism</keyword>
<keyword id="KW-0456">Lyase</keyword>
<name>FABA_ECOUT</name>
<sequence>MVDKRESYTKEDLLASGRGELFGAKGPQLPAPNMLMMDRVVKMTETGGNFDKGYVEAELDINPDLWFFGCHFIGDPVMPGCLGLDAMWQLVGFYLGWLGGEGKGRALGVGEVKFTGQVLPTAKKVTYRIHFKRIVNRRLIMGLADGEVLVDGRLIYTANDLKVGLFQDTSAF</sequence>
<proteinExistence type="inferred from homology"/>
<protein>
    <recommendedName>
        <fullName evidence="1">3-hydroxydecanoyl-[acyl-carrier-protein] dehydratase</fullName>
        <ecNumber evidence="1">4.2.1.59</ecNumber>
    </recommendedName>
    <alternativeName>
        <fullName evidence="1">3-hydroxyacyl-[acyl-carrier-protein] dehydratase FabA</fullName>
    </alternativeName>
    <alternativeName>
        <fullName evidence="1">Beta-hydroxydecanoyl thioester dehydrase</fullName>
    </alternativeName>
    <alternativeName>
        <fullName evidence="1">Trans-2-decenoyl-[acyl-carrier-protein] isomerase</fullName>
        <ecNumber evidence="1">5.3.3.14</ecNumber>
    </alternativeName>
</protein>
<feature type="chain" id="PRO_0000267727" description="3-hydroxydecanoyl-[acyl-carrier-protein] dehydratase">
    <location>
        <begin position="1"/>
        <end position="172"/>
    </location>
</feature>
<feature type="active site" evidence="1">
    <location>
        <position position="71"/>
    </location>
</feature>
<gene>
    <name evidence="1" type="primary">fabA</name>
    <name type="ordered locus">UTI89_C1019</name>
</gene>
<evidence type="ECO:0000255" key="1">
    <source>
        <dbReference type="HAMAP-Rule" id="MF_00405"/>
    </source>
</evidence>
<evidence type="ECO:0000305" key="2"/>
<reference key="1">
    <citation type="journal article" date="2006" name="Proc. Natl. Acad. Sci. U.S.A.">
        <title>Identification of genes subject to positive selection in uropathogenic strains of Escherichia coli: a comparative genomics approach.</title>
        <authorList>
            <person name="Chen S.L."/>
            <person name="Hung C.-S."/>
            <person name="Xu J."/>
            <person name="Reigstad C.S."/>
            <person name="Magrini V."/>
            <person name="Sabo A."/>
            <person name="Blasiar D."/>
            <person name="Bieri T."/>
            <person name="Meyer R.R."/>
            <person name="Ozersky P."/>
            <person name="Armstrong J.R."/>
            <person name="Fulton R.S."/>
            <person name="Latreille J.P."/>
            <person name="Spieth J."/>
            <person name="Hooton T.M."/>
            <person name="Mardis E.R."/>
            <person name="Hultgren S.J."/>
            <person name="Gordon J.I."/>
        </authorList>
    </citation>
    <scope>NUCLEOTIDE SEQUENCE [LARGE SCALE GENOMIC DNA]</scope>
    <source>
        <strain>UTI89 / UPEC</strain>
    </source>
</reference>
<comment type="function">
    <text evidence="1">Necessary for the introduction of cis unsaturation into fatty acids. Catalyzes the dehydration of (3R)-3-hydroxydecanoyl-ACP to E-(2)-decenoyl-ACP and then its isomerization to Z-(3)-decenoyl-ACP. Can catalyze the dehydratase reaction for beta-hydroxyacyl-ACPs with saturated chain lengths up to 16:0, being most active on intermediate chain length.</text>
</comment>
<comment type="catalytic activity">
    <reaction evidence="1">
        <text>a (3R)-hydroxyacyl-[ACP] = a (2E)-enoyl-[ACP] + H2O</text>
        <dbReference type="Rhea" id="RHEA:13097"/>
        <dbReference type="Rhea" id="RHEA-COMP:9925"/>
        <dbReference type="Rhea" id="RHEA-COMP:9945"/>
        <dbReference type="ChEBI" id="CHEBI:15377"/>
        <dbReference type="ChEBI" id="CHEBI:78784"/>
        <dbReference type="ChEBI" id="CHEBI:78827"/>
        <dbReference type="EC" id="4.2.1.59"/>
    </reaction>
</comment>
<comment type="catalytic activity">
    <reaction evidence="1">
        <text>(3R)-hydroxydecanoyl-[ACP] = (2E)-decenoyl-[ACP] + H2O</text>
        <dbReference type="Rhea" id="RHEA:41860"/>
        <dbReference type="Rhea" id="RHEA-COMP:9638"/>
        <dbReference type="Rhea" id="RHEA-COMP:9639"/>
        <dbReference type="ChEBI" id="CHEBI:15377"/>
        <dbReference type="ChEBI" id="CHEBI:78466"/>
        <dbReference type="ChEBI" id="CHEBI:78467"/>
    </reaction>
</comment>
<comment type="catalytic activity">
    <reaction evidence="1">
        <text>(2E)-decenoyl-[ACP] = (3Z)-decenoyl-[ACP]</text>
        <dbReference type="Rhea" id="RHEA:23568"/>
        <dbReference type="Rhea" id="RHEA-COMP:9639"/>
        <dbReference type="Rhea" id="RHEA-COMP:9927"/>
        <dbReference type="ChEBI" id="CHEBI:78467"/>
        <dbReference type="ChEBI" id="CHEBI:78798"/>
        <dbReference type="EC" id="5.3.3.14"/>
    </reaction>
</comment>
<comment type="pathway">
    <text evidence="1">Lipid metabolism; fatty acid biosynthesis.</text>
</comment>
<comment type="subunit">
    <text evidence="1">Homodimer.</text>
</comment>
<comment type="subcellular location">
    <subcellularLocation>
        <location evidence="1">Cytoplasm</location>
    </subcellularLocation>
</comment>
<comment type="similarity">
    <text evidence="1">Belongs to the thioester dehydratase family. FabA subfamily.</text>
</comment>
<comment type="sequence caution" evidence="2">
    <conflict type="erroneous initiation">
        <sequence resource="EMBL-CDS" id="ABE06504"/>
    </conflict>
</comment>
<accession>Q1RDR0</accession>
<organism>
    <name type="scientific">Escherichia coli (strain UTI89 / UPEC)</name>
    <dbReference type="NCBI Taxonomy" id="364106"/>
    <lineage>
        <taxon>Bacteria</taxon>
        <taxon>Pseudomonadati</taxon>
        <taxon>Pseudomonadota</taxon>
        <taxon>Gammaproteobacteria</taxon>
        <taxon>Enterobacterales</taxon>
        <taxon>Enterobacteriaceae</taxon>
        <taxon>Escherichia</taxon>
    </lineage>
</organism>